<protein>
    <recommendedName>
        <fullName evidence="1">Elongation factor Ts</fullName>
        <shortName evidence="1">EF-Ts</shortName>
    </recommendedName>
</protein>
<sequence>MAEITAKLVKELREKSGAGVMDAKKALVETDGDIEKAIELLREKGMAKAAKKADRVAAEGLTGVYVNGNVAAVIEVNAETDFVAKNAQFVELVNTTAKVIAEGKPANNEEALALIMPSGETLEAAYVSATATIGEKISFRRFALIEKTDAQHFGAYQHNGGRIGVISVVEGGDEALAKQLSMHIAAMKPTVLSYKELDEQFVKDELAQLNHVIDQDNESRAMVNKPALPHLKYGSKAQLTDDVIAQAEADIKAELAAEGKPEKIWDKIIPGKMDRFMLDNTKVDQAYTLLAQVYIMDDSKTVEAYLESVNASVVEFARFEVGEGIEKAANDFEAEVAATMAAALNN</sequence>
<comment type="function">
    <text evidence="1">Associates with the EF-Tu.GDP complex and induces the exchange of GDP to GTP. It remains bound to the aminoacyl-tRNA.EF-Tu.GTP complex up to the GTP hydrolysis stage on the ribosome.</text>
</comment>
<comment type="subcellular location">
    <subcellularLocation>
        <location evidence="1">Cytoplasm</location>
    </subcellularLocation>
</comment>
<comment type="similarity">
    <text evidence="1">Belongs to the EF-Ts family.</text>
</comment>
<dbReference type="EMBL" id="CP000919">
    <property type="protein sequence ID" value="ACO18418.1"/>
    <property type="molecule type" value="Genomic_DNA"/>
</dbReference>
<dbReference type="RefSeq" id="WP_000808063.1">
    <property type="nucleotide sequence ID" value="NC_012466.1"/>
</dbReference>
<dbReference type="SMR" id="C1CHL3"/>
<dbReference type="GeneID" id="45652566"/>
<dbReference type="KEGG" id="sjj:SPJ_2240"/>
<dbReference type="HOGENOM" id="CLU_047155_0_1_9"/>
<dbReference type="Proteomes" id="UP000002206">
    <property type="component" value="Chromosome"/>
</dbReference>
<dbReference type="GO" id="GO:0005737">
    <property type="term" value="C:cytoplasm"/>
    <property type="evidence" value="ECO:0007669"/>
    <property type="project" value="UniProtKB-SubCell"/>
</dbReference>
<dbReference type="GO" id="GO:0003746">
    <property type="term" value="F:translation elongation factor activity"/>
    <property type="evidence" value="ECO:0007669"/>
    <property type="project" value="UniProtKB-UniRule"/>
</dbReference>
<dbReference type="CDD" id="cd14275">
    <property type="entry name" value="UBA_EF-Ts"/>
    <property type="match status" value="1"/>
</dbReference>
<dbReference type="FunFam" id="1.10.286.20:FF:000004">
    <property type="entry name" value="Elongation factor Ts"/>
    <property type="match status" value="1"/>
</dbReference>
<dbReference type="FunFam" id="1.10.8.10:FF:000001">
    <property type="entry name" value="Elongation factor Ts"/>
    <property type="match status" value="1"/>
</dbReference>
<dbReference type="FunFam" id="3.30.479.20:FF:000009">
    <property type="entry name" value="Elongation factor Ts"/>
    <property type="match status" value="1"/>
</dbReference>
<dbReference type="FunFam" id="3.30.479.20:FF:000013">
    <property type="entry name" value="Elongation factor Ts"/>
    <property type="match status" value="1"/>
</dbReference>
<dbReference type="FunFam" id="3.30.479.20:FF:000016">
    <property type="entry name" value="Elongation factor Ts"/>
    <property type="match status" value="1"/>
</dbReference>
<dbReference type="Gene3D" id="1.10.286.20">
    <property type="match status" value="1"/>
</dbReference>
<dbReference type="Gene3D" id="1.10.8.10">
    <property type="entry name" value="DNA helicase RuvA subunit, C-terminal domain"/>
    <property type="match status" value="1"/>
</dbReference>
<dbReference type="Gene3D" id="3.30.479.20">
    <property type="entry name" value="Elongation factor Ts, dimerisation domain"/>
    <property type="match status" value="2"/>
</dbReference>
<dbReference type="HAMAP" id="MF_00050">
    <property type="entry name" value="EF_Ts"/>
    <property type="match status" value="1"/>
</dbReference>
<dbReference type="InterPro" id="IPR036402">
    <property type="entry name" value="EF-Ts_dimer_sf"/>
</dbReference>
<dbReference type="InterPro" id="IPR001816">
    <property type="entry name" value="Transl_elong_EFTs/EF1B"/>
</dbReference>
<dbReference type="InterPro" id="IPR014039">
    <property type="entry name" value="Transl_elong_EFTs/EF1B_dimer"/>
</dbReference>
<dbReference type="InterPro" id="IPR018101">
    <property type="entry name" value="Transl_elong_Ts_CS"/>
</dbReference>
<dbReference type="InterPro" id="IPR009060">
    <property type="entry name" value="UBA-like_sf"/>
</dbReference>
<dbReference type="NCBIfam" id="TIGR00116">
    <property type="entry name" value="tsf"/>
    <property type="match status" value="1"/>
</dbReference>
<dbReference type="PANTHER" id="PTHR11741">
    <property type="entry name" value="ELONGATION FACTOR TS"/>
    <property type="match status" value="1"/>
</dbReference>
<dbReference type="PANTHER" id="PTHR11741:SF0">
    <property type="entry name" value="ELONGATION FACTOR TS, MITOCHONDRIAL"/>
    <property type="match status" value="1"/>
</dbReference>
<dbReference type="Pfam" id="PF00889">
    <property type="entry name" value="EF_TS"/>
    <property type="match status" value="1"/>
</dbReference>
<dbReference type="SUPFAM" id="SSF54713">
    <property type="entry name" value="Elongation factor Ts (EF-Ts), dimerisation domain"/>
    <property type="match status" value="2"/>
</dbReference>
<dbReference type="SUPFAM" id="SSF46934">
    <property type="entry name" value="UBA-like"/>
    <property type="match status" value="1"/>
</dbReference>
<dbReference type="PROSITE" id="PS01126">
    <property type="entry name" value="EF_TS_1"/>
    <property type="match status" value="1"/>
</dbReference>
<dbReference type="PROSITE" id="PS01127">
    <property type="entry name" value="EF_TS_2"/>
    <property type="match status" value="1"/>
</dbReference>
<proteinExistence type="inferred from homology"/>
<accession>C1CHL3</accession>
<keyword id="KW-0963">Cytoplasm</keyword>
<keyword id="KW-0251">Elongation factor</keyword>
<keyword id="KW-0648">Protein biosynthesis</keyword>
<feature type="chain" id="PRO_1000189882" description="Elongation factor Ts">
    <location>
        <begin position="1"/>
        <end position="346"/>
    </location>
</feature>
<feature type="region of interest" description="Involved in Mg(2+) ion dislocation from EF-Tu" evidence="1">
    <location>
        <begin position="80"/>
        <end position="83"/>
    </location>
</feature>
<organism>
    <name type="scientific">Streptococcus pneumoniae (strain JJA)</name>
    <dbReference type="NCBI Taxonomy" id="488222"/>
    <lineage>
        <taxon>Bacteria</taxon>
        <taxon>Bacillati</taxon>
        <taxon>Bacillota</taxon>
        <taxon>Bacilli</taxon>
        <taxon>Lactobacillales</taxon>
        <taxon>Streptococcaceae</taxon>
        <taxon>Streptococcus</taxon>
    </lineage>
</organism>
<evidence type="ECO:0000255" key="1">
    <source>
        <dbReference type="HAMAP-Rule" id="MF_00050"/>
    </source>
</evidence>
<reference key="1">
    <citation type="journal article" date="2010" name="Genome Biol.">
        <title>Structure and dynamics of the pan-genome of Streptococcus pneumoniae and closely related species.</title>
        <authorList>
            <person name="Donati C."/>
            <person name="Hiller N.L."/>
            <person name="Tettelin H."/>
            <person name="Muzzi A."/>
            <person name="Croucher N.J."/>
            <person name="Angiuoli S.V."/>
            <person name="Oggioni M."/>
            <person name="Dunning Hotopp J.C."/>
            <person name="Hu F.Z."/>
            <person name="Riley D.R."/>
            <person name="Covacci A."/>
            <person name="Mitchell T.J."/>
            <person name="Bentley S.D."/>
            <person name="Kilian M."/>
            <person name="Ehrlich G.D."/>
            <person name="Rappuoli R."/>
            <person name="Moxon E.R."/>
            <person name="Masignani V."/>
        </authorList>
    </citation>
    <scope>NUCLEOTIDE SEQUENCE [LARGE SCALE GENOMIC DNA]</scope>
    <source>
        <strain>JJA</strain>
    </source>
</reference>
<gene>
    <name evidence="1" type="primary">tsf</name>
    <name type="ordered locus">SPJ_2240</name>
</gene>
<name>EFTS_STRZJ</name>